<organism>
    <name type="scientific">Geobacillus thermodenitrificans (strain NG80-2)</name>
    <dbReference type="NCBI Taxonomy" id="420246"/>
    <lineage>
        <taxon>Bacteria</taxon>
        <taxon>Bacillati</taxon>
        <taxon>Bacillota</taxon>
        <taxon>Bacilli</taxon>
        <taxon>Bacillales</taxon>
        <taxon>Anoxybacillaceae</taxon>
        <taxon>Geobacillus</taxon>
    </lineage>
</organism>
<feature type="chain" id="PRO_0000294264" description="UPF0316 protein GTNG_0803">
    <location>
        <begin position="1"/>
        <end position="183"/>
    </location>
</feature>
<feature type="transmembrane region" description="Helical" evidence="1">
    <location>
        <begin position="5"/>
        <end position="25"/>
    </location>
</feature>
<feature type="transmembrane region" description="Helical" evidence="1">
    <location>
        <begin position="33"/>
        <end position="53"/>
    </location>
</feature>
<feature type="transmembrane region" description="Helical" evidence="1">
    <location>
        <begin position="59"/>
        <end position="79"/>
    </location>
</feature>
<dbReference type="EMBL" id="CP000557">
    <property type="protein sequence ID" value="ABO66181.1"/>
    <property type="molecule type" value="Genomic_DNA"/>
</dbReference>
<dbReference type="RefSeq" id="WP_011887007.1">
    <property type="nucleotide sequence ID" value="NC_009328.1"/>
</dbReference>
<dbReference type="SMR" id="A4ILH7"/>
<dbReference type="KEGG" id="gtn:GTNG_0803"/>
<dbReference type="eggNOG" id="COG4843">
    <property type="taxonomic scope" value="Bacteria"/>
</dbReference>
<dbReference type="HOGENOM" id="CLU_106166_1_0_9"/>
<dbReference type="Proteomes" id="UP000001578">
    <property type="component" value="Chromosome"/>
</dbReference>
<dbReference type="GO" id="GO:0005886">
    <property type="term" value="C:plasma membrane"/>
    <property type="evidence" value="ECO:0007669"/>
    <property type="project" value="UniProtKB-SubCell"/>
</dbReference>
<dbReference type="CDD" id="cd16381">
    <property type="entry name" value="YitT_C_like_1"/>
    <property type="match status" value="1"/>
</dbReference>
<dbReference type="HAMAP" id="MF_01515">
    <property type="entry name" value="UPF0316"/>
    <property type="match status" value="1"/>
</dbReference>
<dbReference type="InterPro" id="IPR019264">
    <property type="entry name" value="DUF2179"/>
</dbReference>
<dbReference type="InterPro" id="IPR044035">
    <property type="entry name" value="DUF5698"/>
</dbReference>
<dbReference type="InterPro" id="IPR022930">
    <property type="entry name" value="UPF0316"/>
</dbReference>
<dbReference type="NCBIfam" id="NF003194">
    <property type="entry name" value="PRK04164.1-5"/>
    <property type="match status" value="1"/>
</dbReference>
<dbReference type="PANTHER" id="PTHR40060">
    <property type="entry name" value="UPF0316 PROTEIN YEBE"/>
    <property type="match status" value="1"/>
</dbReference>
<dbReference type="PANTHER" id="PTHR40060:SF1">
    <property type="entry name" value="UPF0316 PROTEIN YEBE"/>
    <property type="match status" value="1"/>
</dbReference>
<dbReference type="Pfam" id="PF10035">
    <property type="entry name" value="DUF2179"/>
    <property type="match status" value="1"/>
</dbReference>
<dbReference type="Pfam" id="PF18955">
    <property type="entry name" value="DUF5698"/>
    <property type="match status" value="1"/>
</dbReference>
<keyword id="KW-1003">Cell membrane</keyword>
<keyword id="KW-0472">Membrane</keyword>
<keyword id="KW-0812">Transmembrane</keyword>
<keyword id="KW-1133">Transmembrane helix</keyword>
<comment type="subcellular location">
    <subcellularLocation>
        <location evidence="1">Cell membrane</location>
        <topology evidence="1">Multi-pass membrane protein</topology>
    </subcellularLocation>
</comment>
<comment type="similarity">
    <text evidence="1">Belongs to the UPF0316 family.</text>
</comment>
<sequence>MLKDIVLVLALQLVYVPILTLRTIFMVKNMSLLAAFMGFLEALIYVFGLSIVFSGKQSYIVMIVYAAGFGARGFLLEDISSKSWAIGYTTVTVNLQQKNQELIHLLRESGYGVTVYTGEGRDSQRYRLDILTKRNREEELLELIERYEPKAFIISYEPRRFKGGFLVASMKKRVKRKKECHES</sequence>
<reference key="1">
    <citation type="journal article" date="2007" name="Proc. Natl. Acad. Sci. U.S.A.">
        <title>Genome and proteome of long-chain alkane degrading Geobacillus thermodenitrificans NG80-2 isolated from a deep-subsurface oil reservoir.</title>
        <authorList>
            <person name="Feng L."/>
            <person name="Wang W."/>
            <person name="Cheng J."/>
            <person name="Ren Y."/>
            <person name="Zhao G."/>
            <person name="Gao C."/>
            <person name="Tang Y."/>
            <person name="Liu X."/>
            <person name="Han W."/>
            <person name="Peng X."/>
            <person name="Liu R."/>
            <person name="Wang L."/>
        </authorList>
    </citation>
    <scope>NUCLEOTIDE SEQUENCE [LARGE SCALE GENOMIC DNA]</scope>
    <source>
        <strain>NG80-2</strain>
    </source>
</reference>
<name>Y803_GEOTN</name>
<accession>A4ILH7</accession>
<proteinExistence type="inferred from homology"/>
<gene>
    <name type="ordered locus">GTNG_0803</name>
</gene>
<evidence type="ECO:0000255" key="1">
    <source>
        <dbReference type="HAMAP-Rule" id="MF_01515"/>
    </source>
</evidence>
<protein>
    <recommendedName>
        <fullName evidence="1">UPF0316 protein GTNG_0803</fullName>
    </recommendedName>
</protein>